<keyword id="KW-0067">ATP-binding</keyword>
<keyword id="KW-0997">Cell inner membrane</keyword>
<keyword id="KW-1003">Cell membrane</keyword>
<keyword id="KW-0472">Membrane</keyword>
<keyword id="KW-0547">Nucleotide-binding</keyword>
<keyword id="KW-0918">Phosphonate transport</keyword>
<keyword id="KW-0614">Plasmid</keyword>
<keyword id="KW-1185">Reference proteome</keyword>
<keyword id="KW-1278">Translocase</keyword>
<keyword id="KW-0813">Transport</keyword>
<accession>Q1GMA8</accession>
<gene>
    <name evidence="1" type="primary">phnC1</name>
    <name type="ordered locus">TM1040_3234</name>
</gene>
<dbReference type="EC" id="7.3.2.2" evidence="1"/>
<dbReference type="EMBL" id="CP000376">
    <property type="protein sequence ID" value="ABF62208.1"/>
    <property type="molecule type" value="Genomic_DNA"/>
</dbReference>
<dbReference type="RefSeq" id="WP_011536852.1">
    <property type="nucleotide sequence ID" value="NC_008043.1"/>
</dbReference>
<dbReference type="SMR" id="Q1GMA8"/>
<dbReference type="KEGG" id="sit:TM1040_3234"/>
<dbReference type="HOGENOM" id="CLU_000604_1_22_5"/>
<dbReference type="OrthoDB" id="9802264at2"/>
<dbReference type="Proteomes" id="UP000000636">
    <property type="component" value="Plasmid megaplasmid TM1040"/>
</dbReference>
<dbReference type="GO" id="GO:0005886">
    <property type="term" value="C:plasma membrane"/>
    <property type="evidence" value="ECO:0007669"/>
    <property type="project" value="UniProtKB-SubCell"/>
</dbReference>
<dbReference type="GO" id="GO:0015416">
    <property type="term" value="F:ABC-type phosphonate transporter activity"/>
    <property type="evidence" value="ECO:0007669"/>
    <property type="project" value="UniProtKB-EC"/>
</dbReference>
<dbReference type="GO" id="GO:0005524">
    <property type="term" value="F:ATP binding"/>
    <property type="evidence" value="ECO:0007669"/>
    <property type="project" value="UniProtKB-KW"/>
</dbReference>
<dbReference type="GO" id="GO:0016887">
    <property type="term" value="F:ATP hydrolysis activity"/>
    <property type="evidence" value="ECO:0007669"/>
    <property type="project" value="InterPro"/>
</dbReference>
<dbReference type="CDD" id="cd03256">
    <property type="entry name" value="ABC_PhnC_transporter"/>
    <property type="match status" value="1"/>
</dbReference>
<dbReference type="Gene3D" id="3.40.50.300">
    <property type="entry name" value="P-loop containing nucleotide triphosphate hydrolases"/>
    <property type="match status" value="1"/>
</dbReference>
<dbReference type="InterPro" id="IPR003593">
    <property type="entry name" value="AAA+_ATPase"/>
</dbReference>
<dbReference type="InterPro" id="IPR003439">
    <property type="entry name" value="ABC_transporter-like_ATP-bd"/>
</dbReference>
<dbReference type="InterPro" id="IPR017871">
    <property type="entry name" value="ABC_transporter-like_CS"/>
</dbReference>
<dbReference type="InterPro" id="IPR012693">
    <property type="entry name" value="ABC_transpr_PhnC"/>
</dbReference>
<dbReference type="InterPro" id="IPR050086">
    <property type="entry name" value="MetN_ABC_transporter-like"/>
</dbReference>
<dbReference type="InterPro" id="IPR027417">
    <property type="entry name" value="P-loop_NTPase"/>
</dbReference>
<dbReference type="NCBIfam" id="TIGR02315">
    <property type="entry name" value="ABC_phnC"/>
    <property type="match status" value="1"/>
</dbReference>
<dbReference type="PANTHER" id="PTHR43166">
    <property type="entry name" value="AMINO ACID IMPORT ATP-BINDING PROTEIN"/>
    <property type="match status" value="1"/>
</dbReference>
<dbReference type="PANTHER" id="PTHR43166:SF6">
    <property type="entry name" value="PHOSPHONATES IMPORT ATP-BINDING PROTEIN PHNC"/>
    <property type="match status" value="1"/>
</dbReference>
<dbReference type="Pfam" id="PF00005">
    <property type="entry name" value="ABC_tran"/>
    <property type="match status" value="1"/>
</dbReference>
<dbReference type="SMART" id="SM00382">
    <property type="entry name" value="AAA"/>
    <property type="match status" value="1"/>
</dbReference>
<dbReference type="SUPFAM" id="SSF52540">
    <property type="entry name" value="P-loop containing nucleoside triphosphate hydrolases"/>
    <property type="match status" value="1"/>
</dbReference>
<dbReference type="PROSITE" id="PS00211">
    <property type="entry name" value="ABC_TRANSPORTER_1"/>
    <property type="match status" value="1"/>
</dbReference>
<dbReference type="PROSITE" id="PS50893">
    <property type="entry name" value="ABC_TRANSPORTER_2"/>
    <property type="match status" value="1"/>
</dbReference>
<dbReference type="PROSITE" id="PS51249">
    <property type="entry name" value="PHNC"/>
    <property type="match status" value="1"/>
</dbReference>
<reference key="1">
    <citation type="submission" date="2006-05" db="EMBL/GenBank/DDBJ databases">
        <title>Complete sequence of megaplasmid of Silicibacter sp. TM1040.</title>
        <authorList>
            <consortium name="US DOE Joint Genome Institute"/>
            <person name="Copeland A."/>
            <person name="Lucas S."/>
            <person name="Lapidus A."/>
            <person name="Barry K."/>
            <person name="Detter J.C."/>
            <person name="Glavina del Rio T."/>
            <person name="Hammon N."/>
            <person name="Israni S."/>
            <person name="Dalin E."/>
            <person name="Tice H."/>
            <person name="Pitluck S."/>
            <person name="Brettin T."/>
            <person name="Bruce D."/>
            <person name="Han C."/>
            <person name="Tapia R."/>
            <person name="Goodwin L."/>
            <person name="Thompson L.S."/>
            <person name="Gilna P."/>
            <person name="Schmutz J."/>
            <person name="Larimer F."/>
            <person name="Land M."/>
            <person name="Hauser L."/>
            <person name="Kyrpides N."/>
            <person name="Kim E."/>
            <person name="Belas R."/>
            <person name="Moran M.A."/>
            <person name="Buchan A."/>
            <person name="Gonzalez J.M."/>
            <person name="Schell M.A."/>
            <person name="Sun F."/>
            <person name="Richardson P."/>
        </authorList>
    </citation>
    <scope>NUCLEOTIDE SEQUENCE [LARGE SCALE GENOMIC DNA]</scope>
    <source>
        <strain>TM1040</strain>
    </source>
</reference>
<comment type="function">
    <text evidence="1">Part of the ABC transporter complex PhnCDE involved in phosphonates import. Responsible for energy coupling to the transport system.</text>
</comment>
<comment type="catalytic activity">
    <reaction evidence="1">
        <text>phosphonate(out) + ATP + H2O = phosphonate(in) + ADP + phosphate + H(+)</text>
        <dbReference type="Rhea" id="RHEA:18065"/>
        <dbReference type="ChEBI" id="CHEBI:15377"/>
        <dbReference type="ChEBI" id="CHEBI:15378"/>
        <dbReference type="ChEBI" id="CHEBI:16215"/>
        <dbReference type="ChEBI" id="CHEBI:30616"/>
        <dbReference type="ChEBI" id="CHEBI:43474"/>
        <dbReference type="ChEBI" id="CHEBI:456216"/>
        <dbReference type="EC" id="7.3.2.2"/>
    </reaction>
</comment>
<comment type="subunit">
    <text evidence="1">The complex is composed of two ATP-binding proteins (PhnC), two transmembrane proteins (PhnE) and a solute-binding protein (PhnD).</text>
</comment>
<comment type="subcellular location">
    <subcellularLocation>
        <location evidence="1">Cell inner membrane</location>
        <topology evidence="1">Peripheral membrane protein</topology>
    </subcellularLocation>
</comment>
<comment type="similarity">
    <text evidence="1">Belongs to the ABC transporter superfamily. Phosphonates importer (TC 3.A.1.9.1) family.</text>
</comment>
<evidence type="ECO:0000255" key="1">
    <source>
        <dbReference type="HAMAP-Rule" id="MF_01713"/>
    </source>
</evidence>
<sequence length="257" mass="28650">MLKITNLTKRYGSGDPVLKELNLTVEGEQLTSVIGSSGAGKSTLLRCINRLVEPTSGSVELNGTEFTTLSRRELRSARRRIGMVFQGFNLIDRLTVMENVQAGRLGYISTWAALTRRYPKDDIRRAFELMERVGIAHYADKRADELSGGERQRVGVVRALMQRPEILLADEPTASLDPKTSEQIMSLLRDLAQELNLPVIINIHNVTEAKEYSDRIVGMRYGRIIFDDKPAALTRDEMDTIYAGVPAQDRAEVGAVA</sequence>
<organism>
    <name type="scientific">Ruegeria sp. (strain TM1040)</name>
    <name type="common">Silicibacter sp.</name>
    <dbReference type="NCBI Taxonomy" id="292414"/>
    <lineage>
        <taxon>Bacteria</taxon>
        <taxon>Pseudomonadati</taxon>
        <taxon>Pseudomonadota</taxon>
        <taxon>Alphaproteobacteria</taxon>
        <taxon>Rhodobacterales</taxon>
        <taxon>Roseobacteraceae</taxon>
        <taxon>Ruegeria</taxon>
    </lineage>
</organism>
<feature type="chain" id="PRO_0000274755" description="Phosphonates import ATP-binding protein PhnC 1">
    <location>
        <begin position="1"/>
        <end position="257"/>
    </location>
</feature>
<feature type="domain" description="ABC transporter" evidence="1">
    <location>
        <begin position="2"/>
        <end position="246"/>
    </location>
</feature>
<feature type="binding site" evidence="1">
    <location>
        <begin position="35"/>
        <end position="42"/>
    </location>
    <ligand>
        <name>ATP</name>
        <dbReference type="ChEBI" id="CHEBI:30616"/>
    </ligand>
</feature>
<protein>
    <recommendedName>
        <fullName evidence="1">Phosphonates import ATP-binding protein PhnC 1</fullName>
        <ecNumber evidence="1">7.3.2.2</ecNumber>
    </recommendedName>
</protein>
<proteinExistence type="inferred from homology"/>
<geneLocation type="plasmid">
    <name>megaplasmid</name>
</geneLocation>
<name>PHNC1_RUEST</name>